<feature type="signal peptide" evidence="10">
    <location>
        <begin position="1"/>
        <end position="26"/>
    </location>
</feature>
<feature type="chain" id="PRO_0000014627" description="T-cell surface glycoprotein CD4">
    <location>
        <begin position="27"/>
        <end position="457"/>
    </location>
</feature>
<feature type="topological domain" description="Extracellular" evidence="3">
    <location>
        <begin position="27"/>
        <end position="394"/>
    </location>
</feature>
<feature type="transmembrane region" description="Helical" evidence="3">
    <location>
        <begin position="395"/>
        <end position="417"/>
    </location>
</feature>
<feature type="topological domain" description="Cytoplasmic" evidence="3">
    <location>
        <begin position="418"/>
        <end position="457"/>
    </location>
</feature>
<feature type="domain" description="Ig-like V-type">
    <location>
        <begin position="27"/>
        <end position="128"/>
    </location>
</feature>
<feature type="domain" description="Ig-like C2-type 1">
    <location>
        <begin position="129"/>
        <end position="207"/>
    </location>
</feature>
<feature type="domain" description="Ig-like C2-type 2">
    <location>
        <begin position="208"/>
        <end position="317"/>
    </location>
</feature>
<feature type="domain" description="Ig-like C2-type 3">
    <location>
        <begin position="318"/>
        <end position="374"/>
    </location>
</feature>
<feature type="modified residue" description="Phosphoserine" evidence="2">
    <location>
        <position position="432"/>
    </location>
</feature>
<feature type="modified residue" description="Phosphoserine" evidence="2">
    <location>
        <position position="439"/>
    </location>
</feature>
<feature type="lipid moiety-binding region" description="S-palmitoyl cysteine" evidence="1">
    <location>
        <position position="418"/>
    </location>
</feature>
<feature type="lipid moiety-binding region" description="S-palmitoyl cysteine" evidence="1">
    <location>
        <position position="421"/>
    </location>
</feature>
<feature type="glycosylation site" description="N-linked (GlcNAc...) asparagine" evidence="3">
    <location>
        <position position="187"/>
    </location>
</feature>
<feature type="glycosylation site" description="N-linked (GlcNAc...) asparagine" evidence="3">
    <location>
        <position position="298"/>
    </location>
</feature>
<feature type="glycosylation site" description="N-linked (GlcNAc...) asparagine" evidence="3">
    <location>
        <position position="323"/>
    </location>
</feature>
<feature type="glycosylation site" description="N-linked (GlcNAc...) asparagine" evidence="3">
    <location>
        <position position="392"/>
    </location>
</feature>
<feature type="disulfide bond" evidence="4 11">
    <location>
        <begin position="42"/>
        <end position="112"/>
    </location>
</feature>
<feature type="disulfide bond" evidence="4 11">
    <location>
        <begin position="159"/>
        <end position="188"/>
    </location>
</feature>
<feature type="disulfide bond" evidence="4 11">
    <location>
        <begin position="328"/>
        <end position="370"/>
    </location>
</feature>
<feature type="splice variant" id="VSP_002489" description="In isoform 2." evidence="13">
    <location>
        <begin position="1"/>
        <end position="240"/>
    </location>
</feature>
<accession>P06332</accession>
<keyword id="KW-1064">Adaptive immunity</keyword>
<keyword id="KW-0025">Alternative splicing</keyword>
<keyword id="KW-1003">Cell membrane</keyword>
<keyword id="KW-0903">Direct protein sequencing</keyword>
<keyword id="KW-1015">Disulfide bond</keyword>
<keyword id="KW-0325">Glycoprotein</keyword>
<keyword id="KW-0391">Immunity</keyword>
<keyword id="KW-0393">Immunoglobulin domain</keyword>
<keyword id="KW-0449">Lipoprotein</keyword>
<keyword id="KW-0472">Membrane</keyword>
<keyword id="KW-0564">Palmitate</keyword>
<keyword id="KW-0597">Phosphoprotein</keyword>
<keyword id="KW-1185">Reference proteome</keyword>
<keyword id="KW-0677">Repeat</keyword>
<keyword id="KW-0732">Signal</keyword>
<keyword id="KW-0812">Transmembrane</keyword>
<keyword id="KW-1133">Transmembrane helix</keyword>
<reference key="1">
    <citation type="journal article" date="1986" name="Science">
        <title>Isolation and sequence of L3T4 complementary DNA clones: expression in T cells and brain.</title>
        <authorList>
            <person name="Tourvieille B."/>
            <person name="Gorman S.D."/>
            <person name="Field E.H."/>
            <person name="Hunkapiller T."/>
            <person name="Parnes J.R."/>
        </authorList>
    </citation>
    <scope>NUCLEOTIDE SEQUENCE [MRNA]</scope>
</reference>
<reference key="2">
    <citation type="journal article" date="1987" name="Nature">
        <title>Unusual intron in the immunoglobulin domain of the newly isolated murine CD4 (L3T4) gene.</title>
        <authorList>
            <person name="Littman D.R."/>
            <person name="Gettner S.N."/>
        </authorList>
    </citation>
    <scope>NUCLEOTIDE SEQUENCE [MRNA]</scope>
</reference>
<reference key="3">
    <citation type="journal article" date="1987" name="Immunol. Rev.">
        <title>L3T4 and the immunoglobulin gene superfamily: new relationships between the immune system and the nervous system.</title>
        <authorList>
            <person name="Parnes J.R."/>
            <person name="Hunkapiller T."/>
        </authorList>
    </citation>
    <scope>NUCLEOTIDE SEQUENCE</scope>
    <source>
        <tissue>Brain</tissue>
    </source>
</reference>
<reference key="4">
    <citation type="journal article" date="1987" name="Proc. Natl. Acad. Sci. U.S.A.">
        <title>Structure of the mouse gene encoding CD4 and an unusual transcript in brain.</title>
        <authorList>
            <person name="Gorman S.D."/>
            <person name="Tourvieille B."/>
            <person name="Parnes J.R."/>
        </authorList>
    </citation>
    <scope>NUCLEOTIDE SEQUENCE [GENOMIC DNA] (ISOFORM 2)</scope>
    <source>
        <tissue>Brain</tissue>
    </source>
</reference>
<reference key="5">
    <citation type="journal article" date="1998" name="Genome Res.">
        <title>Comparative sequence analysis of a gene-rich cluster at human chromosome 12p13 and its syntenic region in mouse chromosome 6.</title>
        <authorList>
            <person name="Ansari-Lari M.A."/>
            <person name="Oeltjen J.C."/>
            <person name="Schwartz S."/>
            <person name="Zhang Z."/>
            <person name="Muzny D.M."/>
            <person name="Lu J."/>
            <person name="Gorrell J.H."/>
            <person name="Chinault A.C."/>
            <person name="Belmont J.W."/>
            <person name="Miller W."/>
            <person name="Gibbs R.A."/>
        </authorList>
    </citation>
    <scope>NUCLEOTIDE SEQUENCE [GENOMIC DNA]</scope>
</reference>
<reference key="6">
    <citation type="journal article" date="2004" name="Genome Res.">
        <title>The status, quality, and expansion of the NIH full-length cDNA project: the Mammalian Gene Collection (MGC).</title>
        <authorList>
            <consortium name="The MGC Project Team"/>
        </authorList>
    </citation>
    <scope>NUCLEOTIDE SEQUENCE [LARGE SCALE MRNA] (ISOFORM 1)</scope>
    <source>
        <strain>C57BL/6J</strain>
        <tissue>Mammary gland</tissue>
    </source>
</reference>
<reference key="7">
    <citation type="journal article" date="1986" name="Immunogenetics">
        <title>The L3T4 antigen in mouse and the sheep equivalent are immunoglobulin-like.</title>
        <authorList>
            <person name="Classon B.J."/>
            <person name="Tsagaratos J."/>
            <person name="Kirszbaum L."/>
            <person name="Maddox J."/>
            <person name="McKay C.R."/>
            <person name="Brandon M."/>
            <person name="McKenzie I.F.C."/>
            <person name="Walker I.D."/>
        </authorList>
    </citation>
    <scope>PROTEIN SEQUENCE OF 27-43</scope>
</reference>
<reference key="8">
    <citation type="journal article" date="1986" name="Proc. Natl. Acad. Sci. U.S.A.">
        <title>Partial primary structure of the T4 antigens of mouse and sheep: assignment of intrachain disulfide bonds.</title>
        <authorList>
            <person name="Classon B.J."/>
            <person name="Tsagaratos J."/>
            <person name="McKenzie I.F.C."/>
            <person name="Walker I.D."/>
        </authorList>
    </citation>
    <scope>DISULFIDE BONDS</scope>
</reference>
<reference key="9">
    <citation type="journal article" date="1988" name="Cell">
        <title>The CD4 and CD8 T cell surface antigens are associated with the internal membrane tyrosine-protein kinase p56lck.</title>
        <authorList>
            <person name="Veillette A."/>
            <person name="Bookman M.A."/>
            <person name="Horak E.M."/>
            <person name="Bolen J.B."/>
        </authorList>
    </citation>
    <scope>FUNCTION</scope>
    <scope>INTERACTION WITH LCK</scope>
    <scope>SUBCELLULAR LOCATION</scope>
</reference>
<reference key="10">
    <citation type="journal article" date="1989" name="Nature">
        <title>Signal transduction through the CD4 receptor involves the activation of the internal membrane tyrosine-protein kinase p56lck.</title>
        <authorList>
            <person name="Veillette A."/>
            <person name="Bookman M.A."/>
            <person name="Horak E.M."/>
            <person name="Samelson L.E."/>
            <person name="Bolen J.B."/>
        </authorList>
    </citation>
    <scope>FUNCTION</scope>
</reference>
<reference key="11">
    <citation type="journal article" date="1989" name="Immunogenetics">
        <title>Phosphorylation and down-regulation of CD4 and CD8 in human CTLs and mouse L cells.</title>
        <authorList>
            <person name="DiSanto J.P."/>
            <person name="Klein J.S."/>
            <person name="Flomenberg N."/>
        </authorList>
    </citation>
    <scope>PHOSPHORYLATION</scope>
</reference>
<reference key="12">
    <citation type="journal article" date="1991" name="Nature">
        <title>Normal development and function of CD8+ cells but markedly decreased helper cell activity in mice lacking CD4.</title>
        <authorList>
            <person name="Rahemtulla A."/>
            <person name="Fung-Leung W.P."/>
            <person name="Schilham M.W."/>
            <person name="Kuendig T.M."/>
            <person name="Sambhara S.R."/>
            <person name="Narendran A."/>
            <person name="Arabian A."/>
            <person name="Wakeham A."/>
            <person name="Paige C.J."/>
            <person name="Zinkernagel R.M."/>
        </authorList>
    </citation>
    <scope>FUNCTION</scope>
    <scope>DISRUPTION PHENOTYPE</scope>
</reference>
<reference key="13">
    <citation type="journal article" date="2000" name="J. Immunol.">
        <title>CD4 and CD8 expression by dendritic cell subtypes in mouse thymus and spleen.</title>
        <authorList>
            <person name="Vremec D."/>
            <person name="Pooley J."/>
            <person name="Hochrein H."/>
            <person name="Wu L."/>
            <person name="Shortman K."/>
        </authorList>
    </citation>
    <scope>TISSUE SPECIFICITY</scope>
</reference>
<reference key="14">
    <citation type="journal article" date="2006" name="J. Immunol.">
        <title>Evidence for a domain-swapped CD4 dimer as the coreceptor for binding to class II MHC.</title>
        <authorList>
            <person name="Maekawa A."/>
            <person name="Schmidt B."/>
            <person name="Fazekas de St Groth B."/>
            <person name="Sanejouand Y.H."/>
            <person name="Hogg P.J."/>
        </authorList>
    </citation>
    <scope>FUNCTION</scope>
    <scope>SUBUNIT</scope>
</reference>
<reference key="15">
    <citation type="journal article" date="2010" name="Cell">
        <title>A tissue-specific atlas of mouse protein phosphorylation and expression.</title>
        <authorList>
            <person name="Huttlin E.L."/>
            <person name="Jedrychowski M.P."/>
            <person name="Elias J.E."/>
            <person name="Goswami T."/>
            <person name="Rad R."/>
            <person name="Beausoleil S.A."/>
            <person name="Villen J."/>
            <person name="Haas W."/>
            <person name="Sowa M.E."/>
            <person name="Gygi S.P."/>
        </authorList>
    </citation>
    <scope>IDENTIFICATION BY MASS SPECTROMETRY [LARGE SCALE ANALYSIS]</scope>
    <source>
        <tissue>Spleen</tissue>
    </source>
</reference>
<organism>
    <name type="scientific">Mus musculus</name>
    <name type="common">Mouse</name>
    <dbReference type="NCBI Taxonomy" id="10090"/>
    <lineage>
        <taxon>Eukaryota</taxon>
        <taxon>Metazoa</taxon>
        <taxon>Chordata</taxon>
        <taxon>Craniata</taxon>
        <taxon>Vertebrata</taxon>
        <taxon>Euteleostomi</taxon>
        <taxon>Mammalia</taxon>
        <taxon>Eutheria</taxon>
        <taxon>Euarchontoglires</taxon>
        <taxon>Glires</taxon>
        <taxon>Rodentia</taxon>
        <taxon>Myomorpha</taxon>
        <taxon>Muroidea</taxon>
        <taxon>Muridae</taxon>
        <taxon>Murinae</taxon>
        <taxon>Mus</taxon>
        <taxon>Mus</taxon>
    </lineage>
</organism>
<comment type="function">
    <text evidence="2 6 7 9 12">Integral membrane glycoprotein that plays an essential role in the immune response and serves multiple functions in responses against both external and internal offenses. In T-cells, functions primarily as a coreceptor for MHC class II molecule:peptide complex. The antigens presented by class II peptides are derived from extracellular proteins while class I peptides are derived from cytosolic proteins. Interacts simultaneously with the T-cell receptor (TCR) and the MHC class II presented by antigen presenting cells (APCs). In turn, recruits the Src kinase LCK to the vicinity of the TCR-CD3 complex. LCK then initiates different intracellular signaling pathways by phosphorylating various substrates ultimately leading to lymphokine production, motility, adhesion and activation of T-helper cells. In other cells such as macrophages or NK cells, plays a role in differentiation/activation, cytokine expression and cell migration in a TCR/LCK-independent pathway. Participates in the development of T-helper cells in the thymus and triggers the differentiation of monocytes into functional mature macrophages.</text>
</comment>
<comment type="subunit">
    <text evidence="2">Forms disulfide-linked homodimers at the cell surface. Interacts with LCK. Interacts with PTK2/FAK1. Binds to P4HB/PDI. Interacts with IL16; this interaction induces a CD4-dependent signaling in lymphocytes. Interacts (via Ig-like V-type domain) with MHCII alpha chain (via alpha-2 domain) and beta chain (via beta-2 domain); this interaction increases the affinity of TCR for peptide-MHCII. CD4 oligomerization via Ig-like C2-type 2 and 3 domains appears to be required for stable binding to MHCII and adhesion between T cells and APCs.</text>
</comment>
<comment type="interaction">
    <interactant intactId="EBI-1404">
        <id>P06332</id>
    </interactant>
    <interactant intactId="EBI-1401">
        <id>P06240</id>
        <label>Lck</label>
    </interactant>
    <organismsDiffer>false</organismsDiffer>
    <experiments>3</experiments>
</comment>
<comment type="subcellular location">
    <subcellularLocation>
        <location evidence="2">Cell membrane</location>
        <topology evidence="2">Single-pass type I membrane protein</topology>
    </subcellularLocation>
</comment>
<comment type="alternative products">
    <event type="alternative splicing"/>
    <isoform>
        <id>P06332-1</id>
        <name>1</name>
        <sequence type="displayed"/>
    </isoform>
    <isoform>
        <id>P06332-2</id>
        <name>2</name>
        <name>Brain-specific</name>
        <sequence type="described" ref="VSP_002489"/>
    </isoform>
</comment>
<comment type="tissue specificity">
    <text evidence="5">Highly expressed in T-helper cells. The presence of CD4 is a hallmark of T-helper cells which are specialized in the activation and growth of cytotoxic T-cells, regulation of B cells, or activation of phagocytes. CD4 is also present in other immune cells such as macrophages, dendritic cells or NK cells.</text>
</comment>
<comment type="domain">
    <text evidence="2">The Ig-like V-type domain mediates the interaction with MHCII.</text>
</comment>
<comment type="PTM">
    <text evidence="2">Palmitoylation and association with LCK contribute to the enrichment of CD4 in lipid rafts.</text>
</comment>
<comment type="PTM">
    <text evidence="8">Phosphorylated by PKC; phosphorylation plays an important role for CD4 internalization.</text>
</comment>
<comment type="disruption phenotype">
    <text evidence="7">Mice lacking Cd4 display markedly decreased T-helper cell activity.</text>
</comment>
<proteinExistence type="evidence at protein level"/>
<sequence length="457" mass="51297">MCRAISLRRLLLLLLQLSQLLAVTQGKTLVLGKEGESAELPCESSQKKITVFTWKFSDQRKILGQHGKGVLIRGGSPSQFDRFDSKKGAWEKGSFPLIINKLKMEDSQTYICELENRKEEVELWVFKVTFSPGTSLLQGQSLTLTLDSNSKVSNPLTECKHKKGKVVSGSKVLSMSNLRVQDSDFWNCTVTLDQKKNWFGMTLSVLGFQSTAITAYKSEGESAEFSFPLNFAEENGWGELMWKAEKDSFFQPWISFSIKNKEVSVQKSTKDLKLQLKETLPLTLKIPQVSLQFAGSGNLTLTLDKGTLHQEVNLVVMKVAQLNNTLTCEVMGPTSPKMRLTLKQENQEARVSEEQKVVQVVAPETGLWQCLLSEGDKVKMDSRIQVLSRGVNQTVFLACVLGGSFGFLGFLGLCILCCVRCRHQQRQAARMSQIKRLLSEKKTCQCPHRMQKSHNLI</sequence>
<evidence type="ECO:0000250" key="1"/>
<evidence type="ECO:0000250" key="2">
    <source>
        <dbReference type="UniProtKB" id="P01730"/>
    </source>
</evidence>
<evidence type="ECO:0000255" key="3"/>
<evidence type="ECO:0000255" key="4">
    <source>
        <dbReference type="PROSITE-ProRule" id="PRU00114"/>
    </source>
</evidence>
<evidence type="ECO:0000269" key="5">
    <source>
    </source>
</evidence>
<evidence type="ECO:0000269" key="6">
    <source>
    </source>
</evidence>
<evidence type="ECO:0000269" key="7">
    <source>
    </source>
</evidence>
<evidence type="ECO:0000269" key="8">
    <source>
    </source>
</evidence>
<evidence type="ECO:0000269" key="9">
    <source>
    </source>
</evidence>
<evidence type="ECO:0000269" key="10">
    <source>
    </source>
</evidence>
<evidence type="ECO:0000269" key="11">
    <source>
    </source>
</evidence>
<evidence type="ECO:0000269" key="12">
    <source>
    </source>
</evidence>
<evidence type="ECO:0000305" key="13"/>
<name>CD4_MOUSE</name>
<protein>
    <recommendedName>
        <fullName>T-cell surface glycoprotein CD4</fullName>
    </recommendedName>
    <alternativeName>
        <fullName>T-cell differentiation antigen L3T4</fullName>
    </alternativeName>
    <alternativeName>
        <fullName>T-cell surface antigen T4/Leu-3</fullName>
    </alternativeName>
    <cdAntigenName>CD4</cdAntigenName>
</protein>
<gene>
    <name type="primary">Cd4</name>
</gene>
<dbReference type="EMBL" id="M36850">
    <property type="protein sequence ID" value="AAA39401.1"/>
    <property type="molecule type" value="mRNA"/>
</dbReference>
<dbReference type="EMBL" id="M13816">
    <property type="protein sequence ID" value="AAA37267.1"/>
    <property type="molecule type" value="mRNA"/>
</dbReference>
<dbReference type="EMBL" id="X04836">
    <property type="protein sequence ID" value="CAA28539.1"/>
    <property type="molecule type" value="mRNA"/>
</dbReference>
<dbReference type="EMBL" id="M36851">
    <property type="protein sequence ID" value="AAA39402.1"/>
    <property type="molecule type" value="Genomic_DNA"/>
</dbReference>
<dbReference type="EMBL" id="M17080">
    <property type="protein sequence ID" value="AAA37403.1"/>
    <property type="molecule type" value="Genomic_DNA"/>
</dbReference>
<dbReference type="EMBL" id="M17078">
    <property type="protein sequence ID" value="AAA37403.1"/>
    <property type="status" value="JOINED"/>
    <property type="molecule type" value="Genomic_DNA"/>
</dbReference>
<dbReference type="EMBL" id="M17079">
    <property type="protein sequence ID" value="AAA37403.1"/>
    <property type="status" value="JOINED"/>
    <property type="molecule type" value="Genomic_DNA"/>
</dbReference>
<dbReference type="EMBL" id="AC002397">
    <property type="protein sequence ID" value="AAC36010.1"/>
    <property type="molecule type" value="Genomic_DNA"/>
</dbReference>
<dbReference type="EMBL" id="BC039137">
    <property type="protein sequence ID" value="AAH39137.1"/>
    <property type="molecule type" value="mRNA"/>
</dbReference>
<dbReference type="CCDS" id="CCDS20535.1">
    <molecule id="P06332-1"/>
</dbReference>
<dbReference type="PIR" id="A02110">
    <property type="entry name" value="RWMST4"/>
</dbReference>
<dbReference type="RefSeq" id="NP_038516.1">
    <molecule id="P06332-1"/>
    <property type="nucleotide sequence ID" value="NM_013488.3"/>
</dbReference>
<dbReference type="SMR" id="P06332"/>
<dbReference type="BioGRID" id="198599">
    <property type="interactions" value="1"/>
</dbReference>
<dbReference type="FunCoup" id="P06332">
    <property type="interactions" value="720"/>
</dbReference>
<dbReference type="IntAct" id="P06332">
    <property type="interactions" value="5"/>
</dbReference>
<dbReference type="MINT" id="P06332"/>
<dbReference type="STRING" id="10090.ENSMUSP00000024044"/>
<dbReference type="GlyCosmos" id="P06332">
    <property type="glycosylation" value="4 sites, No reported glycans"/>
</dbReference>
<dbReference type="GlyGen" id="P06332">
    <property type="glycosylation" value="7 sites"/>
</dbReference>
<dbReference type="iPTMnet" id="P06332"/>
<dbReference type="PhosphoSitePlus" id="P06332"/>
<dbReference type="PaxDb" id="10090-ENSMUSP00000024044"/>
<dbReference type="ProteomicsDB" id="279984">
    <molecule id="P06332-1"/>
</dbReference>
<dbReference type="ProteomicsDB" id="279985">
    <molecule id="P06332-2"/>
</dbReference>
<dbReference type="ABCD" id="P06332">
    <property type="antibodies" value="7 sequenced antibodies"/>
</dbReference>
<dbReference type="Antibodypedia" id="1341">
    <property type="antibodies" value="7109 antibodies from 62 providers"/>
</dbReference>
<dbReference type="DNASU" id="12504"/>
<dbReference type="Ensembl" id="ENSMUST00000024044.7">
    <molecule id="P06332-1"/>
    <property type="protein sequence ID" value="ENSMUSP00000024044.7"/>
    <property type="gene ID" value="ENSMUSG00000023274.15"/>
</dbReference>
<dbReference type="GeneID" id="12504"/>
<dbReference type="KEGG" id="mmu:12504"/>
<dbReference type="UCSC" id="uc009dsi.1">
    <molecule id="P06332-1"/>
    <property type="organism name" value="mouse"/>
</dbReference>
<dbReference type="UCSC" id="uc012esr.1">
    <molecule id="P06332-2"/>
    <property type="organism name" value="mouse"/>
</dbReference>
<dbReference type="AGR" id="MGI:88335"/>
<dbReference type="CTD" id="920"/>
<dbReference type="MGI" id="MGI:88335">
    <property type="gene designation" value="Cd4"/>
</dbReference>
<dbReference type="VEuPathDB" id="HostDB:ENSMUSG00000023274"/>
<dbReference type="eggNOG" id="ENOG502S0W5">
    <property type="taxonomic scope" value="Eukaryota"/>
</dbReference>
<dbReference type="GeneTree" id="ENSGT00390000001745"/>
<dbReference type="HOGENOM" id="CLU_047414_0_0_1"/>
<dbReference type="InParanoid" id="P06332"/>
<dbReference type="OMA" id="KTCQCSH"/>
<dbReference type="OrthoDB" id="8657369at2759"/>
<dbReference type="PhylomeDB" id="P06332"/>
<dbReference type="TreeFam" id="TF335974"/>
<dbReference type="Reactome" id="R-MMU-1462054">
    <property type="pathway name" value="Alpha-defensins"/>
</dbReference>
<dbReference type="Reactome" id="R-MMU-202424">
    <property type="pathway name" value="Downstream TCR signaling"/>
</dbReference>
<dbReference type="Reactome" id="R-MMU-202427">
    <property type="pathway name" value="Phosphorylation of CD3 and TCR zeta chains"/>
</dbReference>
<dbReference type="Reactome" id="R-MMU-202430">
    <property type="pathway name" value="Translocation of ZAP-70 to Immunological synapse"/>
</dbReference>
<dbReference type="Reactome" id="R-MMU-202433">
    <property type="pathway name" value="Generation of second messenger molecules"/>
</dbReference>
<dbReference type="Reactome" id="R-MMU-389948">
    <property type="pathway name" value="Co-inhibition by PD-1"/>
</dbReference>
<dbReference type="Reactome" id="R-MMU-449836">
    <property type="pathway name" value="Other interleukin signaling"/>
</dbReference>
<dbReference type="Reactome" id="R-MMU-8856825">
    <property type="pathway name" value="Cargo recognition for clathrin-mediated endocytosis"/>
</dbReference>
<dbReference type="Reactome" id="R-MMU-8856828">
    <property type="pathway name" value="Clathrin-mediated endocytosis"/>
</dbReference>
<dbReference type="BioGRID-ORCS" id="12504">
    <property type="hits" value="7 hits in 80 CRISPR screens"/>
</dbReference>
<dbReference type="PRO" id="PR:P06332"/>
<dbReference type="Proteomes" id="UP000000589">
    <property type="component" value="Chromosome 6"/>
</dbReference>
<dbReference type="RNAct" id="P06332">
    <property type="molecule type" value="protein"/>
</dbReference>
<dbReference type="Bgee" id="ENSMUSG00000023274">
    <property type="expression patterns" value="Expressed in thymus and 123 other cell types or tissues"/>
</dbReference>
<dbReference type="ExpressionAtlas" id="P06332">
    <property type="expression patterns" value="baseline and differential"/>
</dbReference>
<dbReference type="GO" id="GO:0009986">
    <property type="term" value="C:cell surface"/>
    <property type="evidence" value="ECO:0000314"/>
    <property type="project" value="MGI"/>
</dbReference>
<dbReference type="GO" id="GO:0005788">
    <property type="term" value="C:endoplasmic reticulum lumen"/>
    <property type="evidence" value="ECO:0000314"/>
    <property type="project" value="MGI"/>
</dbReference>
<dbReference type="GO" id="GO:0005789">
    <property type="term" value="C:endoplasmic reticulum membrane"/>
    <property type="evidence" value="ECO:0000314"/>
    <property type="project" value="MGI"/>
</dbReference>
<dbReference type="GO" id="GO:0009897">
    <property type="term" value="C:external side of plasma membrane"/>
    <property type="evidence" value="ECO:0000314"/>
    <property type="project" value="MGI"/>
</dbReference>
<dbReference type="GO" id="GO:0045121">
    <property type="term" value="C:membrane raft"/>
    <property type="evidence" value="ECO:0000314"/>
    <property type="project" value="MGI"/>
</dbReference>
<dbReference type="GO" id="GO:0005886">
    <property type="term" value="C:plasma membrane"/>
    <property type="evidence" value="ECO:0000314"/>
    <property type="project" value="UniProtKB"/>
</dbReference>
<dbReference type="GO" id="GO:0015026">
    <property type="term" value="F:coreceptor activity"/>
    <property type="evidence" value="ECO:0007669"/>
    <property type="project" value="InterPro"/>
</dbReference>
<dbReference type="GO" id="GO:0042011">
    <property type="term" value="F:interleukin-16 binding"/>
    <property type="evidence" value="ECO:0007669"/>
    <property type="project" value="Ensembl"/>
</dbReference>
<dbReference type="GO" id="GO:0042012">
    <property type="term" value="F:interleukin-16 receptor activity"/>
    <property type="evidence" value="ECO:0007669"/>
    <property type="project" value="Ensembl"/>
</dbReference>
<dbReference type="GO" id="GO:0042289">
    <property type="term" value="F:MHC class II protein binding"/>
    <property type="evidence" value="ECO:0007669"/>
    <property type="project" value="Ensembl"/>
</dbReference>
<dbReference type="GO" id="GO:0023026">
    <property type="term" value="F:MHC class II protein complex binding"/>
    <property type="evidence" value="ECO:0000250"/>
    <property type="project" value="UniProtKB"/>
</dbReference>
<dbReference type="GO" id="GO:0042803">
    <property type="term" value="F:protein homodimerization activity"/>
    <property type="evidence" value="ECO:0007669"/>
    <property type="project" value="Ensembl"/>
</dbReference>
<dbReference type="GO" id="GO:1990782">
    <property type="term" value="F:protein tyrosine kinase binding"/>
    <property type="evidence" value="ECO:0007669"/>
    <property type="project" value="Ensembl"/>
</dbReference>
<dbReference type="GO" id="GO:0008270">
    <property type="term" value="F:zinc ion binding"/>
    <property type="evidence" value="ECO:0007669"/>
    <property type="project" value="Ensembl"/>
</dbReference>
<dbReference type="GO" id="GO:0002250">
    <property type="term" value="P:adaptive immune response"/>
    <property type="evidence" value="ECO:0007669"/>
    <property type="project" value="UniProtKB-KW"/>
</dbReference>
<dbReference type="GO" id="GO:0019722">
    <property type="term" value="P:calcium-mediated signaling"/>
    <property type="evidence" value="ECO:0000314"/>
    <property type="project" value="MGI"/>
</dbReference>
<dbReference type="GO" id="GO:0007155">
    <property type="term" value="P:cell adhesion"/>
    <property type="evidence" value="ECO:0007669"/>
    <property type="project" value="InterPro"/>
</dbReference>
<dbReference type="GO" id="GO:0007166">
    <property type="term" value="P:cell surface receptor signaling pathway"/>
    <property type="evidence" value="ECO:0000314"/>
    <property type="project" value="UniProtKB"/>
</dbReference>
<dbReference type="GO" id="GO:0097011">
    <property type="term" value="P:cellular response to granulocyte macrophage colony-stimulating factor stimulus"/>
    <property type="evidence" value="ECO:0007669"/>
    <property type="project" value="Ensembl"/>
</dbReference>
<dbReference type="GO" id="GO:0050829">
    <property type="term" value="P:defense response to Gram-negative bacterium"/>
    <property type="evidence" value="ECO:0000315"/>
    <property type="project" value="MGI"/>
</dbReference>
<dbReference type="GO" id="GO:0035397">
    <property type="term" value="P:helper T cell enhancement of adaptive immune response"/>
    <property type="evidence" value="ECO:0000315"/>
    <property type="project" value="UniProtKB"/>
</dbReference>
<dbReference type="GO" id="GO:0035723">
    <property type="term" value="P:interleukin-15-mediated signaling pathway"/>
    <property type="evidence" value="ECO:0007669"/>
    <property type="project" value="Ensembl"/>
</dbReference>
<dbReference type="GO" id="GO:0030225">
    <property type="term" value="P:macrophage differentiation"/>
    <property type="evidence" value="ECO:0007669"/>
    <property type="project" value="Ensembl"/>
</dbReference>
<dbReference type="GO" id="GO:0032507">
    <property type="term" value="P:maintenance of protein location in cell"/>
    <property type="evidence" value="ECO:0000266"/>
    <property type="project" value="MGI"/>
</dbReference>
<dbReference type="GO" id="GO:0050850">
    <property type="term" value="P:positive regulation of calcium-mediated signaling"/>
    <property type="evidence" value="ECO:0000314"/>
    <property type="project" value="MGI"/>
</dbReference>
<dbReference type="GO" id="GO:0043123">
    <property type="term" value="P:positive regulation of canonical NF-kappaB signal transduction"/>
    <property type="evidence" value="ECO:0007669"/>
    <property type="project" value="Ensembl"/>
</dbReference>
<dbReference type="GO" id="GO:0045893">
    <property type="term" value="P:positive regulation of DNA-templated transcription"/>
    <property type="evidence" value="ECO:0007669"/>
    <property type="project" value="Ensembl"/>
</dbReference>
<dbReference type="GO" id="GO:0070374">
    <property type="term" value="P:positive regulation of ERK1 and ERK2 cascade"/>
    <property type="evidence" value="ECO:0007669"/>
    <property type="project" value="Ensembl"/>
</dbReference>
<dbReference type="GO" id="GO:0045657">
    <property type="term" value="P:positive regulation of monocyte differentiation"/>
    <property type="evidence" value="ECO:0007669"/>
    <property type="project" value="Ensembl"/>
</dbReference>
<dbReference type="GO" id="GO:0050870">
    <property type="term" value="P:positive regulation of T cell activation"/>
    <property type="evidence" value="ECO:0000314"/>
    <property type="project" value="MGI"/>
</dbReference>
<dbReference type="GO" id="GO:0046598">
    <property type="term" value="P:positive regulation of viral entry into host cell"/>
    <property type="evidence" value="ECO:0007669"/>
    <property type="project" value="Ensembl"/>
</dbReference>
<dbReference type="GO" id="GO:0051924">
    <property type="term" value="P:regulation of calcium ion transport"/>
    <property type="evidence" value="ECO:0007669"/>
    <property type="project" value="Ensembl"/>
</dbReference>
<dbReference type="GO" id="GO:0042110">
    <property type="term" value="P:T cell activation"/>
    <property type="evidence" value="ECO:0000314"/>
    <property type="project" value="MGI"/>
</dbReference>
<dbReference type="GO" id="GO:0030217">
    <property type="term" value="P:T cell differentiation"/>
    <property type="evidence" value="ECO:0000250"/>
    <property type="project" value="UniProtKB"/>
</dbReference>
<dbReference type="GO" id="GO:0045058">
    <property type="term" value="P:T cell selection"/>
    <property type="evidence" value="ECO:0000250"/>
    <property type="project" value="UniProtKB"/>
</dbReference>
<dbReference type="CDD" id="cd22570">
    <property type="entry name" value="CD4_CD"/>
    <property type="match status" value="1"/>
</dbReference>
<dbReference type="FunFam" id="1.20.5.900:FF:000001">
    <property type="entry name" value="T-cell surface glycoprotein CD4"/>
    <property type="match status" value="1"/>
</dbReference>
<dbReference type="FunFam" id="2.60.40.10:FF:001105">
    <property type="entry name" value="T-cell surface glycoprotein CD4"/>
    <property type="match status" value="1"/>
</dbReference>
<dbReference type="FunFam" id="2.60.40.10:FF:001221">
    <property type="entry name" value="T-cell surface glycoprotein CD4"/>
    <property type="match status" value="1"/>
</dbReference>
<dbReference type="FunFam" id="2.60.40.10:FF:001253">
    <property type="entry name" value="T-cell surface glycoprotein CD4"/>
    <property type="match status" value="1"/>
</dbReference>
<dbReference type="FunFam" id="2.60.40.10:FF:002969">
    <property type="entry name" value="T-cell surface glycoprotein CD4"/>
    <property type="match status" value="1"/>
</dbReference>
<dbReference type="Gene3D" id="2.60.40.10">
    <property type="entry name" value="Immunoglobulins"/>
    <property type="match status" value="4"/>
</dbReference>
<dbReference type="Gene3D" id="1.20.5.900">
    <property type="entry name" value="transmembrane domain of human cd4"/>
    <property type="match status" value="1"/>
</dbReference>
<dbReference type="InterPro" id="IPR000973">
    <property type="entry name" value="CD4"/>
</dbReference>
<dbReference type="InterPro" id="IPR015274">
    <property type="entry name" value="CD4-extracel"/>
</dbReference>
<dbReference type="InterPro" id="IPR007110">
    <property type="entry name" value="Ig-like_dom"/>
</dbReference>
<dbReference type="InterPro" id="IPR036179">
    <property type="entry name" value="Ig-like_dom_sf"/>
</dbReference>
<dbReference type="InterPro" id="IPR013783">
    <property type="entry name" value="Ig-like_fold"/>
</dbReference>
<dbReference type="InterPro" id="IPR008424">
    <property type="entry name" value="Ig_C2-set"/>
</dbReference>
<dbReference type="InterPro" id="IPR003599">
    <property type="entry name" value="Ig_sub"/>
</dbReference>
<dbReference type="InterPro" id="IPR013106">
    <property type="entry name" value="Ig_V-set"/>
</dbReference>
<dbReference type="InterPro" id="IPR013151">
    <property type="entry name" value="Immunoglobulin_dom"/>
</dbReference>
<dbReference type="InterPro" id="IPR021963">
    <property type="entry name" value="Tcell_CD4_Cterm"/>
</dbReference>
<dbReference type="PANTHER" id="PTHR11422">
    <property type="entry name" value="T-CELL SURFACE GLYCOPROTEIN CD4"/>
    <property type="match status" value="1"/>
</dbReference>
<dbReference type="PANTHER" id="PTHR11422:SF0">
    <property type="entry name" value="T-CELL SURFACE GLYCOPROTEIN CD4"/>
    <property type="match status" value="1"/>
</dbReference>
<dbReference type="Pfam" id="PF05790">
    <property type="entry name" value="C2-set"/>
    <property type="match status" value="2"/>
</dbReference>
<dbReference type="Pfam" id="PF09191">
    <property type="entry name" value="CD4-extracel"/>
    <property type="match status" value="1"/>
</dbReference>
<dbReference type="Pfam" id="PF00047">
    <property type="entry name" value="ig"/>
    <property type="match status" value="1"/>
</dbReference>
<dbReference type="Pfam" id="PF12104">
    <property type="entry name" value="Tcell_CD4_C"/>
    <property type="match status" value="1"/>
</dbReference>
<dbReference type="PRINTS" id="PR00692">
    <property type="entry name" value="CD4TCANTIGEN"/>
</dbReference>
<dbReference type="SMART" id="SM00409">
    <property type="entry name" value="IG"/>
    <property type="match status" value="3"/>
</dbReference>
<dbReference type="SMART" id="SM00406">
    <property type="entry name" value="IGv"/>
    <property type="match status" value="1"/>
</dbReference>
<dbReference type="SUPFAM" id="SSF48726">
    <property type="entry name" value="Immunoglobulin"/>
    <property type="match status" value="3"/>
</dbReference>
<dbReference type="PROSITE" id="PS50835">
    <property type="entry name" value="IG_LIKE"/>
    <property type="match status" value="1"/>
</dbReference>